<reference key="1">
    <citation type="submission" date="2007-11" db="EMBL/GenBank/DDBJ databases">
        <title>The genome sequence of the hyperthermophilic bacterium Thermotoga neapolitana.</title>
        <authorList>
            <person name="Lim S.K."/>
            <person name="Kim J.S."/>
            <person name="Cha S.H."/>
            <person name="Park B.C."/>
            <person name="Lee D.S."/>
            <person name="Tae H.S."/>
            <person name="Kim S.-J."/>
            <person name="Kim J.J."/>
            <person name="Park K.J."/>
            <person name="Lee S.Y."/>
        </authorList>
    </citation>
    <scope>NUCLEOTIDE SEQUENCE [LARGE SCALE GENOMIC DNA]</scope>
    <source>
        <strain>ATCC 49049 / DSM 4359 / NBRC 107923 / NS-E</strain>
    </source>
</reference>
<evidence type="ECO:0000255" key="1">
    <source>
        <dbReference type="HAMAP-Rule" id="MF_00044"/>
    </source>
</evidence>
<organism>
    <name type="scientific">Thermotoga neapolitana (strain ATCC 49049 / DSM 4359 / NBRC 107923 / NS-E)</name>
    <dbReference type="NCBI Taxonomy" id="309803"/>
    <lineage>
        <taxon>Bacteria</taxon>
        <taxon>Thermotogati</taxon>
        <taxon>Thermotogota</taxon>
        <taxon>Thermotogae</taxon>
        <taxon>Thermotogales</taxon>
        <taxon>Thermotogaceae</taxon>
        <taxon>Thermotoga</taxon>
    </lineage>
</organism>
<accession>B9K8E5</accession>
<keyword id="KW-0030">Aminoacyl-tRNA synthetase</keyword>
<keyword id="KW-0067">ATP-binding</keyword>
<keyword id="KW-0963">Cytoplasm</keyword>
<keyword id="KW-0436">Ligase</keyword>
<keyword id="KW-0547">Nucleotide-binding</keyword>
<keyword id="KW-0648">Protein biosynthesis</keyword>
<feature type="chain" id="PRO_1000199021" description="Aspartate--tRNA(Asp/Asn) ligase">
    <location>
        <begin position="1"/>
        <end position="579"/>
    </location>
</feature>
<feature type="region of interest" description="Aspartate" evidence="1">
    <location>
        <begin position="195"/>
        <end position="198"/>
    </location>
</feature>
<feature type="binding site" evidence="1">
    <location>
        <position position="171"/>
    </location>
    <ligand>
        <name>L-aspartate</name>
        <dbReference type="ChEBI" id="CHEBI:29991"/>
    </ligand>
</feature>
<feature type="binding site" evidence="1">
    <location>
        <begin position="217"/>
        <end position="219"/>
    </location>
    <ligand>
        <name>ATP</name>
        <dbReference type="ChEBI" id="CHEBI:30616"/>
    </ligand>
</feature>
<feature type="binding site" evidence="1">
    <location>
        <position position="217"/>
    </location>
    <ligand>
        <name>L-aspartate</name>
        <dbReference type="ChEBI" id="CHEBI:29991"/>
    </ligand>
</feature>
<feature type="binding site" evidence="1">
    <location>
        <position position="226"/>
    </location>
    <ligand>
        <name>ATP</name>
        <dbReference type="ChEBI" id="CHEBI:30616"/>
    </ligand>
</feature>
<feature type="binding site" evidence="1">
    <location>
        <position position="444"/>
    </location>
    <ligand>
        <name>L-aspartate</name>
        <dbReference type="ChEBI" id="CHEBI:29991"/>
    </ligand>
</feature>
<feature type="binding site" evidence="1">
    <location>
        <position position="475"/>
    </location>
    <ligand>
        <name>ATP</name>
        <dbReference type="ChEBI" id="CHEBI:30616"/>
    </ligand>
</feature>
<feature type="binding site" evidence="1">
    <location>
        <position position="482"/>
    </location>
    <ligand>
        <name>L-aspartate</name>
        <dbReference type="ChEBI" id="CHEBI:29991"/>
    </ligand>
</feature>
<feature type="binding site" evidence="1">
    <location>
        <begin position="527"/>
        <end position="530"/>
    </location>
    <ligand>
        <name>ATP</name>
        <dbReference type="ChEBI" id="CHEBI:30616"/>
    </ligand>
</feature>
<feature type="site" description="Important for tRNA non-discrimination" evidence="1">
    <location>
        <position position="81"/>
    </location>
</feature>
<dbReference type="EC" id="6.1.1.23" evidence="1"/>
<dbReference type="EMBL" id="CP000916">
    <property type="protein sequence ID" value="ACM23228.1"/>
    <property type="molecule type" value="Genomic_DNA"/>
</dbReference>
<dbReference type="RefSeq" id="WP_015919544.1">
    <property type="nucleotide sequence ID" value="NC_011978.1"/>
</dbReference>
<dbReference type="SMR" id="B9K8E5"/>
<dbReference type="STRING" id="309803.CTN_1052"/>
<dbReference type="KEGG" id="tna:CTN_1052"/>
<dbReference type="eggNOG" id="COG0173">
    <property type="taxonomic scope" value="Bacteria"/>
</dbReference>
<dbReference type="HOGENOM" id="CLU_014330_3_2_0"/>
<dbReference type="Proteomes" id="UP000000445">
    <property type="component" value="Chromosome"/>
</dbReference>
<dbReference type="GO" id="GO:0005737">
    <property type="term" value="C:cytoplasm"/>
    <property type="evidence" value="ECO:0007669"/>
    <property type="project" value="UniProtKB-SubCell"/>
</dbReference>
<dbReference type="GO" id="GO:0004815">
    <property type="term" value="F:aspartate-tRNA ligase activity"/>
    <property type="evidence" value="ECO:0007669"/>
    <property type="project" value="UniProtKB-UniRule"/>
</dbReference>
<dbReference type="GO" id="GO:0050560">
    <property type="term" value="F:aspartate-tRNA(Asn) ligase activity"/>
    <property type="evidence" value="ECO:0007669"/>
    <property type="project" value="UniProtKB-EC"/>
</dbReference>
<dbReference type="GO" id="GO:0005524">
    <property type="term" value="F:ATP binding"/>
    <property type="evidence" value="ECO:0007669"/>
    <property type="project" value="UniProtKB-UniRule"/>
</dbReference>
<dbReference type="GO" id="GO:0003676">
    <property type="term" value="F:nucleic acid binding"/>
    <property type="evidence" value="ECO:0007669"/>
    <property type="project" value="InterPro"/>
</dbReference>
<dbReference type="GO" id="GO:0006422">
    <property type="term" value="P:aspartyl-tRNA aminoacylation"/>
    <property type="evidence" value="ECO:0007669"/>
    <property type="project" value="UniProtKB-UniRule"/>
</dbReference>
<dbReference type="CDD" id="cd00777">
    <property type="entry name" value="AspRS_core"/>
    <property type="match status" value="1"/>
</dbReference>
<dbReference type="CDD" id="cd04317">
    <property type="entry name" value="EcAspRS_like_N"/>
    <property type="match status" value="1"/>
</dbReference>
<dbReference type="Gene3D" id="3.30.930.10">
    <property type="entry name" value="Bira Bifunctional Protein, Domain 2"/>
    <property type="match status" value="1"/>
</dbReference>
<dbReference type="Gene3D" id="3.30.1360.30">
    <property type="entry name" value="GAD-like domain"/>
    <property type="match status" value="1"/>
</dbReference>
<dbReference type="Gene3D" id="2.40.50.140">
    <property type="entry name" value="Nucleic acid-binding proteins"/>
    <property type="match status" value="1"/>
</dbReference>
<dbReference type="HAMAP" id="MF_00044">
    <property type="entry name" value="Asp_tRNA_synth_type1"/>
    <property type="match status" value="1"/>
</dbReference>
<dbReference type="InterPro" id="IPR004364">
    <property type="entry name" value="Aa-tRNA-synt_II"/>
</dbReference>
<dbReference type="InterPro" id="IPR006195">
    <property type="entry name" value="aa-tRNA-synth_II"/>
</dbReference>
<dbReference type="InterPro" id="IPR045864">
    <property type="entry name" value="aa-tRNA-synth_II/BPL/LPL"/>
</dbReference>
<dbReference type="InterPro" id="IPR004524">
    <property type="entry name" value="Asp-tRNA-ligase_1"/>
</dbReference>
<dbReference type="InterPro" id="IPR047089">
    <property type="entry name" value="Asp-tRNA-ligase_1_N"/>
</dbReference>
<dbReference type="InterPro" id="IPR002312">
    <property type="entry name" value="Asp/Asn-tRNA-synth_IIb"/>
</dbReference>
<dbReference type="InterPro" id="IPR047090">
    <property type="entry name" value="AspRS_core"/>
</dbReference>
<dbReference type="InterPro" id="IPR004115">
    <property type="entry name" value="GAD-like_sf"/>
</dbReference>
<dbReference type="InterPro" id="IPR029351">
    <property type="entry name" value="GAD_dom"/>
</dbReference>
<dbReference type="InterPro" id="IPR012340">
    <property type="entry name" value="NA-bd_OB-fold"/>
</dbReference>
<dbReference type="InterPro" id="IPR004365">
    <property type="entry name" value="NA-bd_OB_tRNA"/>
</dbReference>
<dbReference type="NCBIfam" id="TIGR00459">
    <property type="entry name" value="aspS_bact"/>
    <property type="match status" value="1"/>
</dbReference>
<dbReference type="NCBIfam" id="NF001750">
    <property type="entry name" value="PRK00476.1"/>
    <property type="match status" value="1"/>
</dbReference>
<dbReference type="PANTHER" id="PTHR22594:SF5">
    <property type="entry name" value="ASPARTATE--TRNA LIGASE, MITOCHONDRIAL"/>
    <property type="match status" value="1"/>
</dbReference>
<dbReference type="PANTHER" id="PTHR22594">
    <property type="entry name" value="ASPARTYL/LYSYL-TRNA SYNTHETASE"/>
    <property type="match status" value="1"/>
</dbReference>
<dbReference type="Pfam" id="PF02938">
    <property type="entry name" value="GAD"/>
    <property type="match status" value="1"/>
</dbReference>
<dbReference type="Pfam" id="PF00152">
    <property type="entry name" value="tRNA-synt_2"/>
    <property type="match status" value="1"/>
</dbReference>
<dbReference type="Pfam" id="PF01336">
    <property type="entry name" value="tRNA_anti-codon"/>
    <property type="match status" value="1"/>
</dbReference>
<dbReference type="PRINTS" id="PR01042">
    <property type="entry name" value="TRNASYNTHASP"/>
</dbReference>
<dbReference type="SUPFAM" id="SSF55681">
    <property type="entry name" value="Class II aaRS and biotin synthetases"/>
    <property type="match status" value="1"/>
</dbReference>
<dbReference type="SUPFAM" id="SSF55261">
    <property type="entry name" value="GAD domain-like"/>
    <property type="match status" value="1"/>
</dbReference>
<dbReference type="SUPFAM" id="SSF50249">
    <property type="entry name" value="Nucleic acid-binding proteins"/>
    <property type="match status" value="1"/>
</dbReference>
<dbReference type="PROSITE" id="PS50862">
    <property type="entry name" value="AA_TRNA_LIGASE_II"/>
    <property type="match status" value="1"/>
</dbReference>
<name>SYDND_THENN</name>
<sequence length="579" mass="66885">MLRTHTCGELRVEDEGKKVKLCGWVDRIRDLGGVRFIDLRDRYGETQIVCDVNSKAYETVDELTRESVVLVEGTVRRRPEGTENPNIATGEIEVVAERIEILSKAEPLPFYPNETPKEEMRLRYRYIDLRSKRMRDNIILRYNITRVIRRYFDELGFLEIETPFLTKSTPEGARDFLVPSRLRPGKFYALPQSPQLFKQLLMISGFDRYFQIVRCFRDEDLRADRQPEFTQVDVEMSFVDVEDVLSVSEGMIARVFREAIGMDLKTPFDRITYSEAMEKYGTDKPDRRYGMELRDLGYAFEGTTFRVIRSVLEEGGSVKGFVVPEFASEMTRKKGDELMERAKELGLGGLIWFKVEEKIVSPHLKHLEREFKTIVEKENLKEGDVCLIAAHKDRNLLNEALGTLRLEIGKEYFSHLAKGFDILWVVDFPYFEWSEEEERFVARHHPFTMPVEETLGDDHTKVKAKAYDIVINGYEVGGGSIRIHKREIQEKIFKLLGMREEEAREKFGFFLEAFKYGVPPHGGIAFGLDRLVAIIAGENSIREVIPFPKTGNGVCLLTGAPSSVDEKQLRELRIRVEEG</sequence>
<protein>
    <recommendedName>
        <fullName evidence="1">Aspartate--tRNA(Asp/Asn) ligase</fullName>
        <ecNumber evidence="1">6.1.1.23</ecNumber>
    </recommendedName>
    <alternativeName>
        <fullName evidence="1">Aspartyl-tRNA synthetase</fullName>
        <shortName evidence="1">AspRS</shortName>
    </alternativeName>
    <alternativeName>
        <fullName evidence="1">Non-discriminating aspartyl-tRNA synthetase</fullName>
        <shortName evidence="1">ND-AspRS</shortName>
    </alternativeName>
</protein>
<comment type="function">
    <text evidence="1">Aspartyl-tRNA synthetase with relaxed tRNA specificity since it is able to aspartylate not only its cognate tRNA(Asp) but also tRNA(Asn). Reaction proceeds in two steps: L-aspartate is first activated by ATP to form Asp-AMP and then transferred to the acceptor end of tRNA(Asp/Asn).</text>
</comment>
<comment type="catalytic activity">
    <reaction evidence="1">
        <text>tRNA(Asx) + L-aspartate + ATP = L-aspartyl-tRNA(Asx) + AMP + diphosphate</text>
        <dbReference type="Rhea" id="RHEA:18349"/>
        <dbReference type="Rhea" id="RHEA-COMP:9710"/>
        <dbReference type="Rhea" id="RHEA-COMP:9711"/>
        <dbReference type="ChEBI" id="CHEBI:29991"/>
        <dbReference type="ChEBI" id="CHEBI:30616"/>
        <dbReference type="ChEBI" id="CHEBI:33019"/>
        <dbReference type="ChEBI" id="CHEBI:78442"/>
        <dbReference type="ChEBI" id="CHEBI:78516"/>
        <dbReference type="ChEBI" id="CHEBI:456215"/>
        <dbReference type="EC" id="6.1.1.23"/>
    </reaction>
</comment>
<comment type="subunit">
    <text evidence="1">Homodimer.</text>
</comment>
<comment type="subcellular location">
    <subcellularLocation>
        <location evidence="1">Cytoplasm</location>
    </subcellularLocation>
</comment>
<comment type="similarity">
    <text evidence="1">Belongs to the class-II aminoacyl-tRNA synthetase family. Type 1 subfamily.</text>
</comment>
<proteinExistence type="inferred from homology"/>
<gene>
    <name evidence="1" type="primary">aspS</name>
    <name type="ordered locus">CTN_1052</name>
</gene>